<protein>
    <recommendedName>
        <fullName evidence="1">Iron-sulfur cluster insertion protein ErpA</fullName>
    </recommendedName>
</protein>
<gene>
    <name evidence="1" type="primary">erpA</name>
    <name type="ordered locus">Sbal_1163</name>
</gene>
<accession>A3D1R9</accession>
<proteinExistence type="inferred from homology"/>
<sequence>MTDQADTAMPIQFTDAAAAKVKGLLEEEQNPALKLRVYVTGGGCSGFQYGFTFDEKVNDGDFTIEKQGVLLVVDPMSLQYLVGGEVDYTSGLEGSRFFVKNPNATTTCGCGASFSV</sequence>
<feature type="chain" id="PRO_0000311548" description="Iron-sulfur cluster insertion protein ErpA">
    <location>
        <begin position="1"/>
        <end position="116"/>
    </location>
</feature>
<feature type="binding site" evidence="1">
    <location>
        <position position="44"/>
    </location>
    <ligand>
        <name>iron-sulfur cluster</name>
        <dbReference type="ChEBI" id="CHEBI:30408"/>
    </ligand>
</feature>
<feature type="binding site" evidence="1">
    <location>
        <position position="108"/>
    </location>
    <ligand>
        <name>iron-sulfur cluster</name>
        <dbReference type="ChEBI" id="CHEBI:30408"/>
    </ligand>
</feature>
<feature type="binding site" evidence="1">
    <location>
        <position position="110"/>
    </location>
    <ligand>
        <name>iron-sulfur cluster</name>
        <dbReference type="ChEBI" id="CHEBI:30408"/>
    </ligand>
</feature>
<name>ERPA_SHEB5</name>
<comment type="function">
    <text evidence="1">Required for insertion of 4Fe-4S clusters for at least IspG.</text>
</comment>
<comment type="cofactor">
    <cofactor evidence="1">
        <name>iron-sulfur cluster</name>
        <dbReference type="ChEBI" id="CHEBI:30408"/>
    </cofactor>
    <text evidence="1">Binds 1 iron-sulfur cluster per subunit.</text>
</comment>
<comment type="subunit">
    <text evidence="1">Homodimer.</text>
</comment>
<comment type="similarity">
    <text evidence="1">Belongs to the HesB/IscA family.</text>
</comment>
<keyword id="KW-0408">Iron</keyword>
<keyword id="KW-0411">Iron-sulfur</keyword>
<keyword id="KW-0479">Metal-binding</keyword>
<keyword id="KW-1185">Reference proteome</keyword>
<dbReference type="EMBL" id="CP000563">
    <property type="protein sequence ID" value="ABN60682.1"/>
    <property type="molecule type" value="Genomic_DNA"/>
</dbReference>
<dbReference type="RefSeq" id="WP_006080742.1">
    <property type="nucleotide sequence ID" value="NC_009052.1"/>
</dbReference>
<dbReference type="SMR" id="A3D1R9"/>
<dbReference type="STRING" id="325240.Sbal_1163"/>
<dbReference type="GeneID" id="11771515"/>
<dbReference type="KEGG" id="sbl:Sbal_1163"/>
<dbReference type="HOGENOM" id="CLU_069054_5_3_6"/>
<dbReference type="OrthoDB" id="9801228at2"/>
<dbReference type="Proteomes" id="UP000001557">
    <property type="component" value="Chromosome"/>
</dbReference>
<dbReference type="GO" id="GO:0005829">
    <property type="term" value="C:cytosol"/>
    <property type="evidence" value="ECO:0007669"/>
    <property type="project" value="TreeGrafter"/>
</dbReference>
<dbReference type="GO" id="GO:0051537">
    <property type="term" value="F:2 iron, 2 sulfur cluster binding"/>
    <property type="evidence" value="ECO:0007669"/>
    <property type="project" value="TreeGrafter"/>
</dbReference>
<dbReference type="GO" id="GO:0051539">
    <property type="term" value="F:4 iron, 4 sulfur cluster binding"/>
    <property type="evidence" value="ECO:0007669"/>
    <property type="project" value="TreeGrafter"/>
</dbReference>
<dbReference type="GO" id="GO:0005506">
    <property type="term" value="F:iron ion binding"/>
    <property type="evidence" value="ECO:0007669"/>
    <property type="project" value="UniProtKB-UniRule"/>
</dbReference>
<dbReference type="GO" id="GO:0016226">
    <property type="term" value="P:iron-sulfur cluster assembly"/>
    <property type="evidence" value="ECO:0007669"/>
    <property type="project" value="UniProtKB-UniRule"/>
</dbReference>
<dbReference type="FunFam" id="2.60.300.12:FF:000002">
    <property type="entry name" value="Iron-sulfur cluster insertion protein ErpA"/>
    <property type="match status" value="1"/>
</dbReference>
<dbReference type="Gene3D" id="2.60.300.12">
    <property type="entry name" value="HesB-like domain"/>
    <property type="match status" value="1"/>
</dbReference>
<dbReference type="HAMAP" id="MF_01380">
    <property type="entry name" value="Fe_S_insert_ErpA"/>
    <property type="match status" value="1"/>
</dbReference>
<dbReference type="InterPro" id="IPR000361">
    <property type="entry name" value="FeS_biogenesis"/>
</dbReference>
<dbReference type="InterPro" id="IPR016092">
    <property type="entry name" value="FeS_cluster_insertion"/>
</dbReference>
<dbReference type="InterPro" id="IPR017870">
    <property type="entry name" value="FeS_cluster_insertion_CS"/>
</dbReference>
<dbReference type="InterPro" id="IPR023063">
    <property type="entry name" value="FeS_cluster_insertion_RrpA"/>
</dbReference>
<dbReference type="InterPro" id="IPR035903">
    <property type="entry name" value="HesB-like_dom_sf"/>
</dbReference>
<dbReference type="NCBIfam" id="TIGR00049">
    <property type="entry name" value="iron-sulfur cluster assembly accessory protein"/>
    <property type="match status" value="1"/>
</dbReference>
<dbReference type="NCBIfam" id="NF010147">
    <property type="entry name" value="PRK13623.1"/>
    <property type="match status" value="1"/>
</dbReference>
<dbReference type="PANTHER" id="PTHR43011">
    <property type="entry name" value="IRON-SULFUR CLUSTER ASSEMBLY 2 HOMOLOG, MITOCHONDRIAL"/>
    <property type="match status" value="1"/>
</dbReference>
<dbReference type="PANTHER" id="PTHR43011:SF1">
    <property type="entry name" value="IRON-SULFUR CLUSTER ASSEMBLY 2 HOMOLOG, MITOCHONDRIAL"/>
    <property type="match status" value="1"/>
</dbReference>
<dbReference type="Pfam" id="PF01521">
    <property type="entry name" value="Fe-S_biosyn"/>
    <property type="match status" value="1"/>
</dbReference>
<dbReference type="SUPFAM" id="SSF89360">
    <property type="entry name" value="HesB-like domain"/>
    <property type="match status" value="1"/>
</dbReference>
<dbReference type="PROSITE" id="PS01152">
    <property type="entry name" value="HESB"/>
    <property type="match status" value="1"/>
</dbReference>
<organism>
    <name type="scientific">Shewanella baltica (strain OS155 / ATCC BAA-1091)</name>
    <dbReference type="NCBI Taxonomy" id="325240"/>
    <lineage>
        <taxon>Bacteria</taxon>
        <taxon>Pseudomonadati</taxon>
        <taxon>Pseudomonadota</taxon>
        <taxon>Gammaproteobacteria</taxon>
        <taxon>Alteromonadales</taxon>
        <taxon>Shewanellaceae</taxon>
        <taxon>Shewanella</taxon>
    </lineage>
</organism>
<reference key="1">
    <citation type="submission" date="2007-02" db="EMBL/GenBank/DDBJ databases">
        <title>Complete sequence of chromosome of Shewanella baltica OS155.</title>
        <authorList>
            <consortium name="US DOE Joint Genome Institute"/>
            <person name="Copeland A."/>
            <person name="Lucas S."/>
            <person name="Lapidus A."/>
            <person name="Barry K."/>
            <person name="Detter J.C."/>
            <person name="Glavina del Rio T."/>
            <person name="Hammon N."/>
            <person name="Israni S."/>
            <person name="Dalin E."/>
            <person name="Tice H."/>
            <person name="Pitluck S."/>
            <person name="Sims D.R."/>
            <person name="Brettin T."/>
            <person name="Bruce D."/>
            <person name="Han C."/>
            <person name="Tapia R."/>
            <person name="Brainard J."/>
            <person name="Schmutz J."/>
            <person name="Larimer F."/>
            <person name="Land M."/>
            <person name="Hauser L."/>
            <person name="Kyrpides N."/>
            <person name="Mikhailova N."/>
            <person name="Brettar I."/>
            <person name="Klappenbach J."/>
            <person name="Konstantinidis K."/>
            <person name="Rodrigues J."/>
            <person name="Tiedje J."/>
            <person name="Richardson P."/>
        </authorList>
    </citation>
    <scope>NUCLEOTIDE SEQUENCE [LARGE SCALE GENOMIC DNA]</scope>
    <source>
        <strain>OS155 / ATCC BAA-1091</strain>
    </source>
</reference>
<evidence type="ECO:0000255" key="1">
    <source>
        <dbReference type="HAMAP-Rule" id="MF_01380"/>
    </source>
</evidence>